<evidence type="ECO:0000250" key="1"/>
<evidence type="ECO:0000255" key="2">
    <source>
        <dbReference type="PROSITE-ProRule" id="PRU01182"/>
    </source>
</evidence>
<evidence type="ECO:0000305" key="3"/>
<proteinExistence type="inferred from homology"/>
<sequence>MEASALKAWELDNNVQLVDPKRDALYNFDADAQKAINKEQPWKQDPSHFKHVRISATALIKMTMHARSGGNLEVMGLMQGYTQGDTFIVTDAFRLPVEGTETRVNAQDEANEYIVEYLDLCRAQGRQENVVGWYHSHPGYGCWLSGIDVDTEAMQQQFQDPFLAVVIDPDRTINSGKVDIGAFRTYPADYKPSGGVTSDGFQAVPLAKAAEFGAHASRYYSLEVSHFKSSLDSHLLELLWHKYWVQTLSQNPLITNRDYGNKQLLDLSSKIKEATTGITRNRAGQGMMMGMSTKSSDKAVDKLAKEANLIASKERSGLIANQVKASLFNDLGSKANPTSE</sequence>
<reference key="1">
    <citation type="journal article" date="2007" name="Science">
        <title>The Fusarium graminearum genome reveals a link between localized polymorphism and pathogen specialization.</title>
        <authorList>
            <person name="Cuomo C.A."/>
            <person name="Gueldener U."/>
            <person name="Xu J.-R."/>
            <person name="Trail F."/>
            <person name="Turgeon B.G."/>
            <person name="Di Pietro A."/>
            <person name="Walton J.D."/>
            <person name="Ma L.-J."/>
            <person name="Baker S.E."/>
            <person name="Rep M."/>
            <person name="Adam G."/>
            <person name="Antoniw J."/>
            <person name="Baldwin T."/>
            <person name="Calvo S.E."/>
            <person name="Chang Y.-L."/>
            <person name="DeCaprio D."/>
            <person name="Gale L.R."/>
            <person name="Gnerre S."/>
            <person name="Goswami R.S."/>
            <person name="Hammond-Kosack K."/>
            <person name="Harris L.J."/>
            <person name="Hilburn K."/>
            <person name="Kennell J.C."/>
            <person name="Kroken S."/>
            <person name="Magnuson J.K."/>
            <person name="Mannhaupt G."/>
            <person name="Mauceli E.W."/>
            <person name="Mewes H.-W."/>
            <person name="Mitterbauer R."/>
            <person name="Muehlbauer G."/>
            <person name="Muensterkoetter M."/>
            <person name="Nelson D."/>
            <person name="O'Donnell K."/>
            <person name="Ouellet T."/>
            <person name="Qi W."/>
            <person name="Quesneville H."/>
            <person name="Roncero M.I.G."/>
            <person name="Seong K.-Y."/>
            <person name="Tetko I.V."/>
            <person name="Urban M."/>
            <person name="Waalwijk C."/>
            <person name="Ward T.J."/>
            <person name="Yao J."/>
            <person name="Birren B.W."/>
            <person name="Kistler H.C."/>
        </authorList>
    </citation>
    <scope>NUCLEOTIDE SEQUENCE [LARGE SCALE GENOMIC DNA]</scope>
    <source>
        <strain>ATCC MYA-4620 / CBS 123657 / FGSC 9075 / NRRL 31084 / PH-1</strain>
    </source>
</reference>
<reference key="2">
    <citation type="journal article" date="2010" name="Nature">
        <title>Comparative genomics reveals mobile pathogenicity chromosomes in Fusarium.</title>
        <authorList>
            <person name="Ma L.-J."/>
            <person name="van der Does H.C."/>
            <person name="Borkovich K.A."/>
            <person name="Coleman J.J."/>
            <person name="Daboussi M.-J."/>
            <person name="Di Pietro A."/>
            <person name="Dufresne M."/>
            <person name="Freitag M."/>
            <person name="Grabherr M."/>
            <person name="Henrissat B."/>
            <person name="Houterman P.M."/>
            <person name="Kang S."/>
            <person name="Shim W.-B."/>
            <person name="Woloshuk C."/>
            <person name="Xie X."/>
            <person name="Xu J.-R."/>
            <person name="Antoniw J."/>
            <person name="Baker S.E."/>
            <person name="Bluhm B.H."/>
            <person name="Breakspear A."/>
            <person name="Brown D.W."/>
            <person name="Butchko R.A.E."/>
            <person name="Chapman S."/>
            <person name="Coulson R."/>
            <person name="Coutinho P.M."/>
            <person name="Danchin E.G.J."/>
            <person name="Diener A."/>
            <person name="Gale L.R."/>
            <person name="Gardiner D.M."/>
            <person name="Goff S."/>
            <person name="Hammond-Kosack K.E."/>
            <person name="Hilburn K."/>
            <person name="Hua-Van A."/>
            <person name="Jonkers W."/>
            <person name="Kazan K."/>
            <person name="Kodira C.D."/>
            <person name="Koehrsen M."/>
            <person name="Kumar L."/>
            <person name="Lee Y.-H."/>
            <person name="Li L."/>
            <person name="Manners J.M."/>
            <person name="Miranda-Saavedra D."/>
            <person name="Mukherjee M."/>
            <person name="Park G."/>
            <person name="Park J."/>
            <person name="Park S.-Y."/>
            <person name="Proctor R.H."/>
            <person name="Regev A."/>
            <person name="Ruiz-Roldan M.C."/>
            <person name="Sain D."/>
            <person name="Sakthikumar S."/>
            <person name="Sykes S."/>
            <person name="Schwartz D.C."/>
            <person name="Turgeon B.G."/>
            <person name="Wapinski I."/>
            <person name="Yoder O."/>
            <person name="Young S."/>
            <person name="Zeng Q."/>
            <person name="Zhou S."/>
            <person name="Galagan J."/>
            <person name="Cuomo C.A."/>
            <person name="Kistler H.C."/>
            <person name="Rep M."/>
        </authorList>
    </citation>
    <scope>GENOME REANNOTATION</scope>
    <source>
        <strain>ATCC MYA-4620 / CBS 123657 / FGSC 9075 / NRRL 31084 / PH-1</strain>
    </source>
</reference>
<reference key="3">
    <citation type="journal article" date="2015" name="BMC Genomics">
        <title>The completed genome sequence of the pathogenic ascomycete fungus Fusarium graminearum.</title>
        <authorList>
            <person name="King R."/>
            <person name="Urban M."/>
            <person name="Hammond-Kosack M.C.U."/>
            <person name="Hassani-Pak K."/>
            <person name="Hammond-Kosack K.E."/>
        </authorList>
    </citation>
    <scope>NUCLEOTIDE SEQUENCE [LARGE SCALE GENOMIC DNA]</scope>
    <source>
        <strain>ATCC MYA-4620 / CBS 123657 / FGSC 9075 / NRRL 31084 / PH-1</strain>
    </source>
</reference>
<name>CSN5_GIBZE</name>
<feature type="chain" id="PRO_0000194853" description="COP9 signalosome complex subunit 5">
    <location>
        <begin position="1"/>
        <end position="340"/>
    </location>
</feature>
<feature type="domain" description="MPN" evidence="2">
    <location>
        <begin position="52"/>
        <end position="189"/>
    </location>
</feature>
<feature type="short sequence motif" description="JAMM motif" evidence="2">
    <location>
        <begin position="135"/>
        <end position="148"/>
    </location>
</feature>
<feature type="binding site" evidence="2">
    <location>
        <position position="135"/>
    </location>
    <ligand>
        <name>Zn(2+)</name>
        <dbReference type="ChEBI" id="CHEBI:29105"/>
        <note>catalytic</note>
    </ligand>
</feature>
<feature type="binding site" evidence="2">
    <location>
        <position position="137"/>
    </location>
    <ligand>
        <name>Zn(2+)</name>
        <dbReference type="ChEBI" id="CHEBI:29105"/>
        <note>catalytic</note>
    </ligand>
</feature>
<feature type="binding site" evidence="2">
    <location>
        <position position="148"/>
    </location>
    <ligand>
        <name>Zn(2+)</name>
        <dbReference type="ChEBI" id="CHEBI:29105"/>
        <note>catalytic</note>
    </ligand>
</feature>
<accession>Q4IJM4</accession>
<accession>A0A0E0RUI0</accession>
<accession>V6R807</accession>
<protein>
    <recommendedName>
        <fullName>COP9 signalosome complex subunit 5</fullName>
        <ecNumber>3.4.-.-</ecNumber>
    </recommendedName>
</protein>
<keyword id="KW-0963">Cytoplasm</keyword>
<keyword id="KW-0378">Hydrolase</keyword>
<keyword id="KW-0479">Metal-binding</keyword>
<keyword id="KW-0482">Metalloprotease</keyword>
<keyword id="KW-0539">Nucleus</keyword>
<keyword id="KW-0645">Protease</keyword>
<keyword id="KW-1185">Reference proteome</keyword>
<keyword id="KW-0736">Signalosome</keyword>
<keyword id="KW-0862">Zinc</keyword>
<dbReference type="EC" id="3.4.-.-"/>
<dbReference type="EMBL" id="DS231663">
    <property type="protein sequence ID" value="ESU08040.1"/>
    <property type="molecule type" value="Genomic_DNA"/>
</dbReference>
<dbReference type="EMBL" id="HG970332">
    <property type="protein sequence ID" value="CEF74905.1"/>
    <property type="molecule type" value="Genomic_DNA"/>
</dbReference>
<dbReference type="RefSeq" id="XP_011318525.1">
    <property type="nucleotide sequence ID" value="XM_011320223.1"/>
</dbReference>
<dbReference type="SMR" id="Q4IJM4"/>
<dbReference type="FunCoup" id="Q4IJM4">
    <property type="interactions" value="42"/>
</dbReference>
<dbReference type="STRING" id="229533.Q4IJM4"/>
<dbReference type="GeneID" id="23549954"/>
<dbReference type="KEGG" id="fgr:FGSG_02584"/>
<dbReference type="VEuPathDB" id="FungiDB:FGRAMPH1_01G06201"/>
<dbReference type="eggNOG" id="KOG1554">
    <property type="taxonomic scope" value="Eukaryota"/>
</dbReference>
<dbReference type="HOGENOM" id="CLU_053034_0_2_1"/>
<dbReference type="InParanoid" id="Q4IJM4"/>
<dbReference type="OrthoDB" id="63439at110618"/>
<dbReference type="Proteomes" id="UP000070720">
    <property type="component" value="Chromosome 1"/>
</dbReference>
<dbReference type="GO" id="GO:0008180">
    <property type="term" value="C:COP9 signalosome"/>
    <property type="evidence" value="ECO:0007669"/>
    <property type="project" value="UniProtKB-KW"/>
</dbReference>
<dbReference type="GO" id="GO:0005737">
    <property type="term" value="C:cytoplasm"/>
    <property type="evidence" value="ECO:0007669"/>
    <property type="project" value="UniProtKB-SubCell"/>
</dbReference>
<dbReference type="GO" id="GO:0046872">
    <property type="term" value="F:metal ion binding"/>
    <property type="evidence" value="ECO:0007669"/>
    <property type="project" value="UniProtKB-KW"/>
</dbReference>
<dbReference type="GO" id="GO:0008237">
    <property type="term" value="F:metallopeptidase activity"/>
    <property type="evidence" value="ECO:0007669"/>
    <property type="project" value="UniProtKB-KW"/>
</dbReference>
<dbReference type="GO" id="GO:0006508">
    <property type="term" value="P:proteolysis"/>
    <property type="evidence" value="ECO:0007669"/>
    <property type="project" value="UniProtKB-KW"/>
</dbReference>
<dbReference type="CDD" id="cd08069">
    <property type="entry name" value="MPN_RPN11_CSN5"/>
    <property type="match status" value="1"/>
</dbReference>
<dbReference type="FunFam" id="3.40.140.10:FF:000003">
    <property type="entry name" value="COP9 signalosome complex subunit 5"/>
    <property type="match status" value="1"/>
</dbReference>
<dbReference type="Gene3D" id="3.40.140.10">
    <property type="entry name" value="Cytidine Deaminase, domain 2"/>
    <property type="match status" value="1"/>
</dbReference>
<dbReference type="InterPro" id="IPR040961">
    <property type="entry name" value="CSN5_C"/>
</dbReference>
<dbReference type="InterPro" id="IPR000555">
    <property type="entry name" value="JAMM/MPN+_dom"/>
</dbReference>
<dbReference type="InterPro" id="IPR050242">
    <property type="entry name" value="JAMM_MPN+_peptidase_M67A"/>
</dbReference>
<dbReference type="InterPro" id="IPR037518">
    <property type="entry name" value="MPN"/>
</dbReference>
<dbReference type="PANTHER" id="PTHR10410">
    <property type="entry name" value="EUKARYOTIC TRANSLATION INITIATION FACTOR 3 -RELATED"/>
    <property type="match status" value="1"/>
</dbReference>
<dbReference type="Pfam" id="PF18323">
    <property type="entry name" value="CSN5_C"/>
    <property type="match status" value="1"/>
</dbReference>
<dbReference type="Pfam" id="PF01398">
    <property type="entry name" value="JAB"/>
    <property type="match status" value="1"/>
</dbReference>
<dbReference type="SMART" id="SM00232">
    <property type="entry name" value="JAB_MPN"/>
    <property type="match status" value="1"/>
</dbReference>
<dbReference type="SUPFAM" id="SSF102712">
    <property type="entry name" value="JAB1/MPN domain"/>
    <property type="match status" value="1"/>
</dbReference>
<dbReference type="PROSITE" id="PS50249">
    <property type="entry name" value="MPN"/>
    <property type="match status" value="1"/>
</dbReference>
<organism>
    <name type="scientific">Gibberella zeae (strain ATCC MYA-4620 / CBS 123657 / FGSC 9075 / NRRL 31084 / PH-1)</name>
    <name type="common">Wheat head blight fungus</name>
    <name type="synonym">Fusarium graminearum</name>
    <dbReference type="NCBI Taxonomy" id="229533"/>
    <lineage>
        <taxon>Eukaryota</taxon>
        <taxon>Fungi</taxon>
        <taxon>Dikarya</taxon>
        <taxon>Ascomycota</taxon>
        <taxon>Pezizomycotina</taxon>
        <taxon>Sordariomycetes</taxon>
        <taxon>Hypocreomycetidae</taxon>
        <taxon>Hypocreales</taxon>
        <taxon>Nectriaceae</taxon>
        <taxon>Fusarium</taxon>
    </lineage>
</organism>
<gene>
    <name type="primary">RRI1</name>
    <name type="synonym">CSN5</name>
    <name type="ORF">FGRRES_02584</name>
    <name type="ORF">FGSG_02584</name>
</gene>
<comment type="function">
    <text evidence="1">Catalytic Component of the COP9 signalosome (CSN) complex that acts as an regulator of the ubiquitin (Ubl) conjugation pathway by mediating the deneddylation of the cullin subunit of SCF-type E3 ubiquitin-protein ligase complexes.</text>
</comment>
<comment type="subunit">
    <text evidence="1">Component of the COP9 signalosome (CSN) complex.</text>
</comment>
<comment type="subcellular location">
    <subcellularLocation>
        <location evidence="1">Cytoplasm</location>
    </subcellularLocation>
    <subcellularLocation>
        <location evidence="1">Nucleus</location>
    </subcellularLocation>
</comment>
<comment type="domain">
    <text evidence="1">The JAMM motif is essential for the protease activity of the CSN complex resulting in deneddylation of cullins. It constitutes the catalytic center of the complex (By similarity).</text>
</comment>
<comment type="similarity">
    <text evidence="3">Belongs to the peptidase M67A family. CSN5 subfamily.</text>
</comment>